<keyword id="KW-0002">3D-structure</keyword>
<keyword id="KW-0408">Iron</keyword>
<keyword id="KW-0460">Magnesium</keyword>
<keyword id="KW-0479">Metal-binding</keyword>
<keyword id="KW-0533">Nickel</keyword>
<keyword id="KW-0560">Oxidoreductase</keyword>
<keyword id="KW-0574">Periplasm</keyword>
<feature type="chain" id="PRO_0000013405" description="Periplasmic [NiFe] hydrogenase large subunit">
    <location>
        <begin position="1"/>
        <end position="552"/>
    </location>
</feature>
<feature type="propeptide" id="PRO_0000013406">
    <location>
        <begin position="553"/>
        <end position="567"/>
    </location>
</feature>
<feature type="binding site" evidence="1 2 4 5">
    <location>
        <position position="62"/>
    </location>
    <ligand>
        <name>Mg(2+)</name>
        <dbReference type="ChEBI" id="CHEBI:18420"/>
    </ligand>
</feature>
<feature type="binding site" evidence="1 2 4 5">
    <location>
        <position position="81"/>
    </location>
    <ligand>
        <name>Ni(2+)</name>
        <dbReference type="ChEBI" id="CHEBI:49786"/>
    </ligand>
</feature>
<feature type="binding site" evidence="1 2 4 5">
    <location>
        <position position="84"/>
    </location>
    <ligand>
        <name>Fe cation</name>
        <dbReference type="ChEBI" id="CHEBI:24875"/>
    </ligand>
</feature>
<feature type="binding site" evidence="1 2 4 5">
    <location>
        <position position="84"/>
    </location>
    <ligand>
        <name>Ni(2+)</name>
        <dbReference type="ChEBI" id="CHEBI:49786"/>
    </ligand>
</feature>
<feature type="binding site" evidence="1 2 4 5">
    <location>
        <position position="498"/>
    </location>
    <ligand>
        <name>Mg(2+)</name>
        <dbReference type="ChEBI" id="CHEBI:18420"/>
    </ligand>
</feature>
<feature type="binding site" evidence="1 2 4 5">
    <location>
        <position position="546"/>
    </location>
    <ligand>
        <name>Ni(2+)</name>
        <dbReference type="ChEBI" id="CHEBI:49786"/>
    </ligand>
</feature>
<feature type="binding site" evidence="1 2 4 5">
    <location>
        <position position="549"/>
    </location>
    <ligand>
        <name>Fe cation</name>
        <dbReference type="ChEBI" id="CHEBI:24875"/>
    </ligand>
</feature>
<feature type="binding site" evidence="1 2 4 5">
    <location>
        <position position="549"/>
    </location>
    <ligand>
        <name>Ni(2+)</name>
        <dbReference type="ChEBI" id="CHEBI:49786"/>
    </ligand>
</feature>
<feature type="binding site" evidence="1 2 4 5">
    <location>
        <position position="552"/>
    </location>
    <ligand>
        <name>Mg(2+)</name>
        <dbReference type="ChEBI" id="CHEBI:18420"/>
    </ligand>
</feature>
<feature type="sequence conflict" description="In Ref. 1; AAA23370." evidence="3" ref="1">
    <original>S</original>
    <variation>T</variation>
    <location>
        <position position="180"/>
    </location>
</feature>
<feature type="sequence conflict" description="In Ref. 1; AAA23370." evidence="3" ref="1">
    <original>KL</original>
    <variation>NV</variation>
    <location>
        <begin position="514"/>
        <end position="515"/>
    </location>
</feature>
<feature type="strand" evidence="9">
    <location>
        <begin position="23"/>
        <end position="29"/>
    </location>
</feature>
<feature type="strand" evidence="9">
    <location>
        <begin position="32"/>
        <end position="35"/>
    </location>
</feature>
<feature type="strand" evidence="9">
    <location>
        <begin position="37"/>
        <end position="44"/>
    </location>
</feature>
<feature type="strand" evidence="9">
    <location>
        <begin position="47"/>
        <end position="55"/>
    </location>
</feature>
<feature type="helix" evidence="9">
    <location>
        <begin position="61"/>
        <end position="65"/>
    </location>
</feature>
<feature type="helix" evidence="9">
    <location>
        <begin position="70"/>
        <end position="72"/>
    </location>
</feature>
<feature type="helix" evidence="9">
    <location>
        <begin position="73"/>
        <end position="78"/>
    </location>
</feature>
<feature type="strand" evidence="9">
    <location>
        <begin position="82"/>
        <end position="84"/>
    </location>
</feature>
<feature type="helix" evidence="9">
    <location>
        <begin position="87"/>
        <end position="100"/>
    </location>
</feature>
<feature type="helix" evidence="9">
    <location>
        <begin position="106"/>
        <end position="130"/>
    </location>
</feature>
<feature type="helix" evidence="9">
    <location>
        <begin position="133"/>
        <end position="135"/>
    </location>
</feature>
<feature type="helix" evidence="9">
    <location>
        <begin position="140"/>
        <end position="144"/>
    </location>
</feature>
<feature type="helix" evidence="9">
    <location>
        <begin position="147"/>
        <end position="157"/>
    </location>
</feature>
<feature type="strand" evidence="9">
    <location>
        <begin position="158"/>
        <end position="160"/>
    </location>
</feature>
<feature type="helix" evidence="9">
    <location>
        <begin position="164"/>
        <end position="179"/>
    </location>
</feature>
<feature type="helix" evidence="9">
    <location>
        <begin position="184"/>
        <end position="186"/>
    </location>
</feature>
<feature type="turn" evidence="9">
    <location>
        <begin position="190"/>
        <end position="193"/>
    </location>
</feature>
<feature type="helix" evidence="9">
    <location>
        <begin position="202"/>
        <end position="230"/>
    </location>
</feature>
<feature type="strand" evidence="9">
    <location>
        <begin position="233"/>
        <end position="235"/>
    </location>
</feature>
<feature type="helix" evidence="9">
    <location>
        <begin position="247"/>
        <end position="250"/>
    </location>
</feature>
<feature type="helix" evidence="9">
    <location>
        <begin position="252"/>
        <end position="271"/>
    </location>
</feature>
<feature type="helix" evidence="9">
    <location>
        <begin position="273"/>
        <end position="283"/>
    </location>
</feature>
<feature type="helix" evidence="9">
    <location>
        <begin position="284"/>
        <end position="289"/>
    </location>
</feature>
<feature type="strand" evidence="9">
    <location>
        <begin position="296"/>
        <end position="305"/>
    </location>
</feature>
<feature type="helix" evidence="9">
    <location>
        <begin position="309"/>
        <end position="311"/>
    </location>
</feature>
<feature type="strand" evidence="9">
    <location>
        <begin position="312"/>
        <end position="320"/>
    </location>
</feature>
<feature type="helix" evidence="7">
    <location>
        <begin position="324"/>
        <end position="326"/>
    </location>
</feature>
<feature type="helix" evidence="9">
    <location>
        <begin position="332"/>
        <end position="334"/>
    </location>
</feature>
<feature type="strand" evidence="9">
    <location>
        <begin position="335"/>
        <end position="338"/>
    </location>
</feature>
<feature type="turn" evidence="9">
    <location>
        <begin position="340"/>
        <end position="343"/>
    </location>
</feature>
<feature type="strand" evidence="9">
    <location>
        <begin position="344"/>
        <end position="347"/>
    </location>
</feature>
<feature type="helix" evidence="9">
    <location>
        <begin position="352"/>
        <end position="354"/>
    </location>
</feature>
<feature type="helix" evidence="10">
    <location>
        <begin position="366"/>
        <end position="368"/>
    </location>
</feature>
<feature type="strand" evidence="8">
    <location>
        <begin position="371"/>
        <end position="373"/>
    </location>
</feature>
<feature type="strand" evidence="9">
    <location>
        <begin position="375"/>
        <end position="378"/>
    </location>
</feature>
<feature type="helix" evidence="9">
    <location>
        <begin position="387"/>
        <end position="396"/>
    </location>
</feature>
<feature type="helix" evidence="9">
    <location>
        <begin position="400"/>
        <end position="413"/>
    </location>
</feature>
<feature type="helix" evidence="9">
    <location>
        <begin position="417"/>
        <end position="420"/>
    </location>
</feature>
<feature type="helix" evidence="9">
    <location>
        <begin position="423"/>
        <end position="453"/>
    </location>
</feature>
<feature type="strand" evidence="9">
    <location>
        <begin position="467"/>
        <end position="477"/>
    </location>
</feature>
<feature type="strand" evidence="9">
    <location>
        <begin position="480"/>
        <end position="489"/>
    </location>
</feature>
<feature type="strand" evidence="9">
    <location>
        <begin position="492"/>
        <end position="499"/>
    </location>
</feature>
<feature type="helix" evidence="9">
    <location>
        <begin position="501"/>
        <end position="506"/>
    </location>
</feature>
<feature type="helix" evidence="9">
    <location>
        <begin position="517"/>
        <end position="522"/>
    </location>
</feature>
<feature type="strand" evidence="6">
    <location>
        <begin position="530"/>
        <end position="532"/>
    </location>
</feature>
<feature type="helix" evidence="9">
    <location>
        <begin position="534"/>
        <end position="542"/>
    </location>
</feature>
<feature type="helix" evidence="9">
    <location>
        <begin position="547"/>
        <end position="551"/>
    </location>
</feature>
<sequence>MSGCRAQNAPGGIPVTPKSSYSGPIVVDPVTRIEGHLRIEVEVENGKVKNAYSSSTLFRGLEIILKGRDPRDAQHFTQRTCGVCTYTHALASTRCVDNAVGVHIPKNATYIRNLVLGAQYLHDHIVHFYHLHALDFVDVTAALKADPAKAAKVASSISPRKTTAADLKAVQDKLKTFVESGQLGPFTNAYFLGGHPAYYLDPETNLIATAHYLEALRLQVKAARAMAVFGAKNPHTQFTVVGGVTCYDALTPQRIAEFEALWKETKAFVDEVYIPDLLVVAAAYKDWTQYGGTDNFITFGEFPKDEYDLNSRFFKPGVVFKRDFKNIKPFDKMQIEEHVRHSWYEGAEARHPWKGQTQPKYTDLHGDDRYSWMKAPRYMGEPMETGPLAQVLIAYSQGHPKVKAVTDAVLAKLGVGPEALFSTLGRTAARGIETAVIAEYVGVMLQEYKDNIAKGDNVICAPWEMPKQAEGVGFVNAPRGGLSHWIRIEDGKIGNFQLVVPSTWTLGPRCDKNKLSPVEASLIGTPVADAKRPVEILRTVHSFDPCIACGVHVIDGHTNEVHKFRIL</sequence>
<reference key="1">
    <citation type="journal article" date="1990" name="J. Gen. Microbiol.">
        <title>Cloning and sequencing of a [NiFe] hydrogenase operon from Desulfovibrio vulgaris Miyazaki F.</title>
        <authorList>
            <person name="Deckers H.M."/>
            <person name="Wilson F.R."/>
            <person name="Voordouw G."/>
        </authorList>
    </citation>
    <scope>NUCLEOTIDE SEQUENCE [GENOMIC DNA]</scope>
</reference>
<reference key="2">
    <citation type="submission" date="2008-10" db="EMBL/GenBank/DDBJ databases">
        <title>Complete sequence of Desulfovibrio vulgaris str. 'Miyazaki F'.</title>
        <authorList>
            <person name="Lucas S."/>
            <person name="Copeland A."/>
            <person name="Lapidus A."/>
            <person name="Glavina del Rio T."/>
            <person name="Dalin E."/>
            <person name="Tice H."/>
            <person name="Bruce D."/>
            <person name="Goodwin L."/>
            <person name="Pitluck S."/>
            <person name="Sims D."/>
            <person name="Brettin T."/>
            <person name="Detter J.C."/>
            <person name="Han C."/>
            <person name="Larimer F."/>
            <person name="Land M."/>
            <person name="Hauser L."/>
            <person name="Kyrpides N."/>
            <person name="Mikhailova N."/>
            <person name="Hazen T.C."/>
            <person name="Richardson P."/>
        </authorList>
    </citation>
    <scope>NUCLEOTIDE SEQUENCE [LARGE SCALE GENOMIC DNA]</scope>
    <source>
        <strain>DSM 19637 / Miyazaki F</strain>
    </source>
</reference>
<reference evidence="4" key="3">
    <citation type="journal article" date="1997" name="Structure">
        <title>Unusual ligand structure in Ni-Fe active center and an additional Mg site in hydrogenase revealed by high resolution X-ray structure analysis.</title>
        <authorList>
            <person name="Higuchi Y."/>
            <person name="Yagi T."/>
            <person name="Yasuoka N."/>
        </authorList>
    </citation>
    <scope>X-RAY CRYSTALLOGRAPHY (1.8 ANGSTROMS) OF 19-552</scope>
    <scope>COFACTOR</scope>
</reference>
<reference evidence="5" key="4">
    <citation type="journal article" date="1999" name="Structure">
        <title>Removal of the bridging ligand atom at the Ni-Fe active site of [NiFe] hydrogenase upon reduction with H2, as revealed by X-ray structure analysis at 1.4 A resolution.</title>
        <authorList>
            <person name="Higuchi Y."/>
            <person name="Ogata H."/>
            <person name="Miki K."/>
            <person name="Yasuoka N."/>
            <person name="Yagi T."/>
        </authorList>
    </citation>
    <scope>X-RAY CRYSTALLOGRAPHY (1.4 ANGSTROMS)</scope>
    <scope>COFACTOR</scope>
</reference>
<evidence type="ECO:0000269" key="1">
    <source>
    </source>
</evidence>
<evidence type="ECO:0000269" key="2">
    <source>
    </source>
</evidence>
<evidence type="ECO:0000305" key="3"/>
<evidence type="ECO:0007744" key="4">
    <source>
        <dbReference type="PDB" id="1H2A"/>
    </source>
</evidence>
<evidence type="ECO:0007744" key="5">
    <source>
        <dbReference type="PDB" id="1H2R"/>
    </source>
</evidence>
<evidence type="ECO:0007829" key="6">
    <source>
        <dbReference type="PDB" id="1H2R"/>
    </source>
</evidence>
<evidence type="ECO:0007829" key="7">
    <source>
        <dbReference type="PDB" id="1UBT"/>
    </source>
</evidence>
<evidence type="ECO:0007829" key="8">
    <source>
        <dbReference type="PDB" id="1WUI"/>
    </source>
</evidence>
<evidence type="ECO:0007829" key="9">
    <source>
        <dbReference type="PDB" id="4U9H"/>
    </source>
</evidence>
<evidence type="ECO:0007829" key="10">
    <source>
        <dbReference type="PDB" id="4U9I"/>
    </source>
</evidence>
<accession>P21852</accession>
<accession>B8DPE0</accession>
<comment type="function">
    <text>Catalyzes the reversible oxidoreduction of molecular hydrogen, in conjunction with a specific electron acceptor, cytochrome c3.</text>
</comment>
<comment type="catalytic activity">
    <reaction>
        <text>2 Fe(III)-[cytochrome c3] + H2 = 2 Fe(II)-[cytochrome c3] + 2 H(+)</text>
        <dbReference type="Rhea" id="RHEA:20625"/>
        <dbReference type="Rhea" id="RHEA-COMP:11576"/>
        <dbReference type="Rhea" id="RHEA-COMP:11577"/>
        <dbReference type="ChEBI" id="CHEBI:15378"/>
        <dbReference type="ChEBI" id="CHEBI:18276"/>
        <dbReference type="ChEBI" id="CHEBI:29033"/>
        <dbReference type="ChEBI" id="CHEBI:29034"/>
        <dbReference type="EC" id="1.12.2.1"/>
    </reaction>
</comment>
<comment type="cofactor">
    <cofactor evidence="1 2">
        <name>Ni(2+)</name>
        <dbReference type="ChEBI" id="CHEBI:49786"/>
    </cofactor>
</comment>
<comment type="cofactor">
    <cofactor evidence="1 2">
        <name>Fe cation</name>
        <dbReference type="ChEBI" id="CHEBI:24875"/>
    </cofactor>
</comment>
<comment type="subunit">
    <text>Heterodimer of a large and a small subunit.</text>
</comment>
<comment type="subcellular location">
    <subcellularLocation>
        <location>Periplasm</location>
    </subcellularLocation>
</comment>
<comment type="miscellaneous">
    <text>Perhaps the leader of the small subunit serves as a transport vehicle for both subunits.</text>
</comment>
<comment type="similarity">
    <text evidence="3">Belongs to the [NiFe]/[NiFeSe] hydrogenase large subunit family.</text>
</comment>
<organism>
    <name type="scientific">Nitratidesulfovibrio vulgaris (strain DSM 19637 / Miyazaki F)</name>
    <name type="common">Desulfovibrio vulgaris</name>
    <dbReference type="NCBI Taxonomy" id="883"/>
    <lineage>
        <taxon>Bacteria</taxon>
        <taxon>Pseudomonadati</taxon>
        <taxon>Thermodesulfobacteriota</taxon>
        <taxon>Desulfovibrionia</taxon>
        <taxon>Desulfovibrionales</taxon>
        <taxon>Desulfovibrionaceae</taxon>
        <taxon>Nitratidesulfovibrio</taxon>
    </lineage>
</organism>
<name>PHNL_NITV9</name>
<proteinExistence type="evidence at protein level"/>
<gene>
    <name type="primary">hydB</name>
    <name type="ordered locus">DvMF_0270</name>
</gene>
<dbReference type="EC" id="1.12.2.1"/>
<dbReference type="EMBL" id="M58339">
    <property type="protein sequence ID" value="AAA23370.1"/>
    <property type="molecule type" value="Genomic_DNA"/>
</dbReference>
<dbReference type="EMBL" id="CP001197">
    <property type="protein sequence ID" value="ACL07227.1"/>
    <property type="molecule type" value="Genomic_DNA"/>
</dbReference>
<dbReference type="PIR" id="B45865">
    <property type="entry name" value="B45865"/>
</dbReference>
<dbReference type="PDB" id="1H2A">
    <property type="method" value="X-ray"/>
    <property type="resolution" value="1.80 A"/>
    <property type="chains" value="L=1-567"/>
</dbReference>
<dbReference type="PDB" id="1H2R">
    <property type="method" value="X-ray"/>
    <property type="resolution" value="1.40 A"/>
    <property type="chains" value="L=19-552"/>
</dbReference>
<dbReference type="PDB" id="1UBH">
    <property type="method" value="X-ray"/>
    <property type="resolution" value="1.35 A"/>
    <property type="chains" value="L=19-552"/>
</dbReference>
<dbReference type="PDB" id="1UBJ">
    <property type="method" value="X-ray"/>
    <property type="resolution" value="1.35 A"/>
    <property type="chains" value="L=19-552"/>
</dbReference>
<dbReference type="PDB" id="1UBK">
    <property type="method" value="X-ray"/>
    <property type="resolution" value="1.18 A"/>
    <property type="chains" value="L=19-552"/>
</dbReference>
<dbReference type="PDB" id="1UBL">
    <property type="method" value="X-ray"/>
    <property type="resolution" value="1.20 A"/>
    <property type="chains" value="L=19-552"/>
</dbReference>
<dbReference type="PDB" id="1UBM">
    <property type="method" value="X-ray"/>
    <property type="resolution" value="1.40 A"/>
    <property type="chains" value="L=19-552"/>
</dbReference>
<dbReference type="PDB" id="1UBO">
    <property type="method" value="X-ray"/>
    <property type="resolution" value="1.35 A"/>
    <property type="chains" value="L=19-552"/>
</dbReference>
<dbReference type="PDB" id="1UBR">
    <property type="method" value="X-ray"/>
    <property type="resolution" value="1.34 A"/>
    <property type="chains" value="L=19-552"/>
</dbReference>
<dbReference type="PDB" id="1UBT">
    <property type="method" value="X-ray"/>
    <property type="resolution" value="1.34 A"/>
    <property type="chains" value="L=19-552"/>
</dbReference>
<dbReference type="PDB" id="1UBU">
    <property type="method" value="X-ray"/>
    <property type="resolution" value="1.35 A"/>
    <property type="chains" value="L=19-552"/>
</dbReference>
<dbReference type="PDB" id="1WUH">
    <property type="method" value="X-ray"/>
    <property type="resolution" value="1.24 A"/>
    <property type="chains" value="L=19-552"/>
</dbReference>
<dbReference type="PDB" id="1WUI">
    <property type="method" value="X-ray"/>
    <property type="resolution" value="1.04 A"/>
    <property type="chains" value="L=19-552"/>
</dbReference>
<dbReference type="PDB" id="1WUJ">
    <property type="method" value="X-ray"/>
    <property type="resolution" value="1.40 A"/>
    <property type="chains" value="L=19-552"/>
</dbReference>
<dbReference type="PDB" id="1WUK">
    <property type="method" value="X-ray"/>
    <property type="resolution" value="1.10 A"/>
    <property type="chains" value="L=19-552"/>
</dbReference>
<dbReference type="PDB" id="1WUL">
    <property type="method" value="X-ray"/>
    <property type="resolution" value="1.50 A"/>
    <property type="chains" value="L=19-552"/>
</dbReference>
<dbReference type="PDB" id="4U9H">
    <property type="method" value="X-ray"/>
    <property type="resolution" value="0.89 A"/>
    <property type="chains" value="L=20-552"/>
</dbReference>
<dbReference type="PDB" id="4U9I">
    <property type="method" value="X-ray"/>
    <property type="resolution" value="1.06 A"/>
    <property type="chains" value="L=20-552"/>
</dbReference>
<dbReference type="PDB" id="5XLE">
    <property type="method" value="X-ray"/>
    <property type="resolution" value="1.69 A"/>
    <property type="chains" value="L=1-552"/>
</dbReference>
<dbReference type="PDB" id="5XLF">
    <property type="method" value="X-ray"/>
    <property type="resolution" value="1.71 A"/>
    <property type="chains" value="L=1-552"/>
</dbReference>
<dbReference type="PDB" id="5XLG">
    <property type="method" value="X-ray"/>
    <property type="resolution" value="1.64 A"/>
    <property type="chains" value="L=1-552"/>
</dbReference>
<dbReference type="PDB" id="5XLH">
    <property type="method" value="X-ray"/>
    <property type="resolution" value="1.93 A"/>
    <property type="chains" value="L=1-552"/>
</dbReference>
<dbReference type="PDB" id="5Y4N">
    <property type="method" value="X-ray"/>
    <property type="resolution" value="1.69 A"/>
    <property type="chains" value="L=1-552"/>
</dbReference>
<dbReference type="PDB" id="8W6X">
    <property type="method" value="Other"/>
    <property type="resolution" value="1.04 A"/>
    <property type="chains" value="L=20-552"/>
</dbReference>
<dbReference type="PDBsum" id="1H2A"/>
<dbReference type="PDBsum" id="1H2R"/>
<dbReference type="PDBsum" id="1UBH"/>
<dbReference type="PDBsum" id="1UBJ"/>
<dbReference type="PDBsum" id="1UBK"/>
<dbReference type="PDBsum" id="1UBL"/>
<dbReference type="PDBsum" id="1UBM"/>
<dbReference type="PDBsum" id="1UBO"/>
<dbReference type="PDBsum" id="1UBR"/>
<dbReference type="PDBsum" id="1UBT"/>
<dbReference type="PDBsum" id="1UBU"/>
<dbReference type="PDBsum" id="1WUH"/>
<dbReference type="PDBsum" id="1WUI"/>
<dbReference type="PDBsum" id="1WUJ"/>
<dbReference type="PDBsum" id="1WUK"/>
<dbReference type="PDBsum" id="1WUL"/>
<dbReference type="PDBsum" id="4U9H"/>
<dbReference type="PDBsum" id="4U9I"/>
<dbReference type="PDBsum" id="5XLE"/>
<dbReference type="PDBsum" id="5XLF"/>
<dbReference type="PDBsum" id="5XLG"/>
<dbReference type="PDBsum" id="5XLH"/>
<dbReference type="PDBsum" id="5Y4N"/>
<dbReference type="PDBsum" id="8W6X"/>
<dbReference type="SMR" id="P21852"/>
<dbReference type="DIP" id="DIP-41378N"/>
<dbReference type="IntAct" id="P21852">
    <property type="interactions" value="1"/>
</dbReference>
<dbReference type="MINT" id="P21852"/>
<dbReference type="STRING" id="883.DvMF_0270"/>
<dbReference type="KEGG" id="dvm:DvMF_0270"/>
<dbReference type="eggNOG" id="COG0374">
    <property type="taxonomic scope" value="Bacteria"/>
</dbReference>
<dbReference type="HOGENOM" id="CLU_030087_0_0_7"/>
<dbReference type="OrthoDB" id="9761717at2"/>
<dbReference type="EvolutionaryTrace" id="P21852"/>
<dbReference type="GO" id="GO:0042597">
    <property type="term" value="C:periplasmic space"/>
    <property type="evidence" value="ECO:0007669"/>
    <property type="project" value="UniProtKB-SubCell"/>
</dbReference>
<dbReference type="GO" id="GO:0047806">
    <property type="term" value="F:cytochrome-c3 hydrogenase activity"/>
    <property type="evidence" value="ECO:0007669"/>
    <property type="project" value="UniProtKB-EC"/>
</dbReference>
<dbReference type="GO" id="GO:0008901">
    <property type="term" value="F:ferredoxin hydrogenase activity"/>
    <property type="evidence" value="ECO:0007669"/>
    <property type="project" value="InterPro"/>
</dbReference>
<dbReference type="GO" id="GO:0016151">
    <property type="term" value="F:nickel cation binding"/>
    <property type="evidence" value="ECO:0007669"/>
    <property type="project" value="InterPro"/>
</dbReference>
<dbReference type="FunFam" id="1.10.645.10:FF:000002">
    <property type="entry name" value="Hydrogenase 2 large subunit"/>
    <property type="match status" value="1"/>
</dbReference>
<dbReference type="Gene3D" id="1.10.645.10">
    <property type="entry name" value="Cytochrome-c3 Hydrogenase, chain B"/>
    <property type="match status" value="1"/>
</dbReference>
<dbReference type="InterPro" id="IPR001501">
    <property type="entry name" value="Ni-dep_hyd_lsu"/>
</dbReference>
<dbReference type="InterPro" id="IPR018194">
    <property type="entry name" value="Ni-dep_hyd_lsu_Ni_BS"/>
</dbReference>
<dbReference type="InterPro" id="IPR029014">
    <property type="entry name" value="NiFe-Hase_large"/>
</dbReference>
<dbReference type="InterPro" id="IPR050867">
    <property type="entry name" value="NiFe/NiFeSe_hydrgnase_LSU"/>
</dbReference>
<dbReference type="PANTHER" id="PTHR42958">
    <property type="entry name" value="HYDROGENASE-2 LARGE CHAIN"/>
    <property type="match status" value="1"/>
</dbReference>
<dbReference type="PANTHER" id="PTHR42958:SF2">
    <property type="entry name" value="UPTAKE HYDROGENASE LARGE SUBUNIT"/>
    <property type="match status" value="1"/>
</dbReference>
<dbReference type="Pfam" id="PF00374">
    <property type="entry name" value="NiFeSe_Hases"/>
    <property type="match status" value="1"/>
</dbReference>
<dbReference type="SUPFAM" id="SSF56762">
    <property type="entry name" value="HydB/Nqo4-like"/>
    <property type="match status" value="1"/>
</dbReference>
<dbReference type="PROSITE" id="PS00507">
    <property type="entry name" value="NI_HGENASE_L_1"/>
    <property type="match status" value="1"/>
</dbReference>
<dbReference type="PROSITE" id="PS00508">
    <property type="entry name" value="NI_HGENASE_L_2"/>
    <property type="match status" value="1"/>
</dbReference>
<protein>
    <recommendedName>
        <fullName>Periplasmic [NiFe] hydrogenase large subunit</fullName>
        <ecNumber>1.12.2.1</ecNumber>
    </recommendedName>
    <alternativeName>
        <fullName>NiFe hydrogenlyase large chain</fullName>
    </alternativeName>
</protein>